<feature type="chain" id="PRO_1000053901" description="Uridylate kinase">
    <location>
        <begin position="1"/>
        <end position="239"/>
    </location>
</feature>
<feature type="region of interest" description="Involved in allosteric activation by GTP" evidence="1">
    <location>
        <begin position="18"/>
        <end position="23"/>
    </location>
</feature>
<feature type="binding site" evidence="1">
    <location>
        <begin position="10"/>
        <end position="13"/>
    </location>
    <ligand>
        <name>ATP</name>
        <dbReference type="ChEBI" id="CHEBI:30616"/>
    </ligand>
</feature>
<feature type="binding site" evidence="1">
    <location>
        <position position="52"/>
    </location>
    <ligand>
        <name>UMP</name>
        <dbReference type="ChEBI" id="CHEBI:57865"/>
    </ligand>
</feature>
<feature type="binding site" evidence="1">
    <location>
        <position position="53"/>
    </location>
    <ligand>
        <name>ATP</name>
        <dbReference type="ChEBI" id="CHEBI:30616"/>
    </ligand>
</feature>
<feature type="binding site" evidence="1">
    <location>
        <position position="57"/>
    </location>
    <ligand>
        <name>ATP</name>
        <dbReference type="ChEBI" id="CHEBI:30616"/>
    </ligand>
</feature>
<feature type="binding site" evidence="1">
    <location>
        <position position="73"/>
    </location>
    <ligand>
        <name>UMP</name>
        <dbReference type="ChEBI" id="CHEBI:57865"/>
    </ligand>
</feature>
<feature type="binding site" evidence="1">
    <location>
        <begin position="134"/>
        <end position="141"/>
    </location>
    <ligand>
        <name>UMP</name>
        <dbReference type="ChEBI" id="CHEBI:57865"/>
    </ligand>
</feature>
<feature type="binding site" evidence="1">
    <location>
        <position position="161"/>
    </location>
    <ligand>
        <name>ATP</name>
        <dbReference type="ChEBI" id="CHEBI:30616"/>
    </ligand>
</feature>
<feature type="binding site" evidence="1">
    <location>
        <position position="167"/>
    </location>
    <ligand>
        <name>ATP</name>
        <dbReference type="ChEBI" id="CHEBI:30616"/>
    </ligand>
</feature>
<feature type="binding site" evidence="1">
    <location>
        <position position="170"/>
    </location>
    <ligand>
        <name>ATP</name>
        <dbReference type="ChEBI" id="CHEBI:30616"/>
    </ligand>
</feature>
<reference key="1">
    <citation type="submission" date="2007-07" db="EMBL/GenBank/DDBJ databases">
        <title>Complete genome sequence of Campylobacter jejuni subsp doylei 269.97 isolated from human blood.</title>
        <authorList>
            <person name="Fouts D.E."/>
            <person name="Mongodin E.F."/>
            <person name="Puiu D."/>
            <person name="Sebastian Y."/>
            <person name="Miller W.G."/>
            <person name="Mandrell R.E."/>
            <person name="Lastovica A.J."/>
            <person name="Nelson K.E."/>
        </authorList>
    </citation>
    <scope>NUCLEOTIDE SEQUENCE [LARGE SCALE GENOMIC DNA]</scope>
    <source>
        <strain>ATCC BAA-1458 / RM4099 / 269.97</strain>
    </source>
</reference>
<comment type="function">
    <text evidence="1">Catalyzes the reversible phosphorylation of UMP to UDP.</text>
</comment>
<comment type="catalytic activity">
    <reaction evidence="1">
        <text>UMP + ATP = UDP + ADP</text>
        <dbReference type="Rhea" id="RHEA:24400"/>
        <dbReference type="ChEBI" id="CHEBI:30616"/>
        <dbReference type="ChEBI" id="CHEBI:57865"/>
        <dbReference type="ChEBI" id="CHEBI:58223"/>
        <dbReference type="ChEBI" id="CHEBI:456216"/>
        <dbReference type="EC" id="2.7.4.22"/>
    </reaction>
</comment>
<comment type="activity regulation">
    <text evidence="1">Allosterically activated by GTP. Inhibited by UTP.</text>
</comment>
<comment type="pathway">
    <text evidence="1">Pyrimidine metabolism; CTP biosynthesis via de novo pathway; UDP from UMP (UMPK route): step 1/1.</text>
</comment>
<comment type="subunit">
    <text evidence="1">Homohexamer.</text>
</comment>
<comment type="subcellular location">
    <subcellularLocation>
        <location evidence="1">Cytoplasm</location>
    </subcellularLocation>
</comment>
<comment type="similarity">
    <text evidence="1">Belongs to the UMP kinase family.</text>
</comment>
<keyword id="KW-0021">Allosteric enzyme</keyword>
<keyword id="KW-0067">ATP-binding</keyword>
<keyword id="KW-0963">Cytoplasm</keyword>
<keyword id="KW-0418">Kinase</keyword>
<keyword id="KW-0547">Nucleotide-binding</keyword>
<keyword id="KW-0665">Pyrimidine biosynthesis</keyword>
<keyword id="KW-0808">Transferase</keyword>
<proteinExistence type="inferred from homology"/>
<organism>
    <name type="scientific">Campylobacter jejuni subsp. doylei (strain ATCC BAA-1458 / RM4099 / 269.97)</name>
    <dbReference type="NCBI Taxonomy" id="360109"/>
    <lineage>
        <taxon>Bacteria</taxon>
        <taxon>Pseudomonadati</taxon>
        <taxon>Campylobacterota</taxon>
        <taxon>Epsilonproteobacteria</taxon>
        <taxon>Campylobacterales</taxon>
        <taxon>Campylobacteraceae</taxon>
        <taxon>Campylobacter</taxon>
    </lineage>
</organism>
<accession>A7H2A6</accession>
<evidence type="ECO:0000255" key="1">
    <source>
        <dbReference type="HAMAP-Rule" id="MF_01220"/>
    </source>
</evidence>
<gene>
    <name evidence="1" type="primary">pyrH</name>
    <name type="ordered locus">JJD26997_0451</name>
</gene>
<sequence>MQERKRVLVKFSGEALAGENGFGIENSILKFIASEIKELIKNQIEVGIVIGGGNIIRGVSAAKGGLIKRTSGDHMGMLATVINAIAIQEALERSGLEVRVQSAIQMEAFCETYIMRRAQRHLEKGRVVVFAAGTGNPYFTTDTTAILRAVEIDADMVIKATKVNGVYDKDPKQFDDAVFLNTLSYDEAMQDNIKVMDDTAIALAKDNKLPIVVCNMFEEGNLLKIIQGDTSLCSIVKNN</sequence>
<protein>
    <recommendedName>
        <fullName evidence="1">Uridylate kinase</fullName>
        <shortName evidence="1">UK</shortName>
        <ecNumber evidence="1">2.7.4.22</ecNumber>
    </recommendedName>
    <alternativeName>
        <fullName evidence="1">Uridine monophosphate kinase</fullName>
        <shortName evidence="1">UMP kinase</shortName>
        <shortName evidence="1">UMPK</shortName>
    </alternativeName>
</protein>
<dbReference type="EC" id="2.7.4.22" evidence="1"/>
<dbReference type="EMBL" id="CP000768">
    <property type="protein sequence ID" value="ABS44550.1"/>
    <property type="molecule type" value="Genomic_DNA"/>
</dbReference>
<dbReference type="SMR" id="A7H2A6"/>
<dbReference type="KEGG" id="cjd:JJD26997_0451"/>
<dbReference type="HOGENOM" id="CLU_033861_0_0_7"/>
<dbReference type="UniPathway" id="UPA00159">
    <property type="reaction ID" value="UER00275"/>
</dbReference>
<dbReference type="Proteomes" id="UP000002302">
    <property type="component" value="Chromosome"/>
</dbReference>
<dbReference type="GO" id="GO:0005829">
    <property type="term" value="C:cytosol"/>
    <property type="evidence" value="ECO:0007669"/>
    <property type="project" value="TreeGrafter"/>
</dbReference>
<dbReference type="GO" id="GO:0005524">
    <property type="term" value="F:ATP binding"/>
    <property type="evidence" value="ECO:0007669"/>
    <property type="project" value="UniProtKB-KW"/>
</dbReference>
<dbReference type="GO" id="GO:0033862">
    <property type="term" value="F:UMP kinase activity"/>
    <property type="evidence" value="ECO:0007669"/>
    <property type="project" value="UniProtKB-EC"/>
</dbReference>
<dbReference type="GO" id="GO:0044210">
    <property type="term" value="P:'de novo' CTP biosynthetic process"/>
    <property type="evidence" value="ECO:0007669"/>
    <property type="project" value="UniProtKB-UniRule"/>
</dbReference>
<dbReference type="GO" id="GO:0006225">
    <property type="term" value="P:UDP biosynthetic process"/>
    <property type="evidence" value="ECO:0007669"/>
    <property type="project" value="TreeGrafter"/>
</dbReference>
<dbReference type="CDD" id="cd04254">
    <property type="entry name" value="AAK_UMPK-PyrH-Ec"/>
    <property type="match status" value="1"/>
</dbReference>
<dbReference type="FunFam" id="3.40.1160.10:FF:000001">
    <property type="entry name" value="Uridylate kinase"/>
    <property type="match status" value="1"/>
</dbReference>
<dbReference type="Gene3D" id="3.40.1160.10">
    <property type="entry name" value="Acetylglutamate kinase-like"/>
    <property type="match status" value="1"/>
</dbReference>
<dbReference type="HAMAP" id="MF_01220_B">
    <property type="entry name" value="PyrH_B"/>
    <property type="match status" value="1"/>
</dbReference>
<dbReference type="InterPro" id="IPR036393">
    <property type="entry name" value="AceGlu_kinase-like_sf"/>
</dbReference>
<dbReference type="InterPro" id="IPR001048">
    <property type="entry name" value="Asp/Glu/Uridylate_kinase"/>
</dbReference>
<dbReference type="InterPro" id="IPR011817">
    <property type="entry name" value="Uridylate_kinase"/>
</dbReference>
<dbReference type="InterPro" id="IPR015963">
    <property type="entry name" value="Uridylate_kinase_bac"/>
</dbReference>
<dbReference type="NCBIfam" id="TIGR02075">
    <property type="entry name" value="pyrH_bact"/>
    <property type="match status" value="1"/>
</dbReference>
<dbReference type="PANTHER" id="PTHR42833">
    <property type="entry name" value="URIDYLATE KINASE"/>
    <property type="match status" value="1"/>
</dbReference>
<dbReference type="PANTHER" id="PTHR42833:SF4">
    <property type="entry name" value="URIDYLATE KINASE PUMPKIN, CHLOROPLASTIC"/>
    <property type="match status" value="1"/>
</dbReference>
<dbReference type="Pfam" id="PF00696">
    <property type="entry name" value="AA_kinase"/>
    <property type="match status" value="1"/>
</dbReference>
<dbReference type="PIRSF" id="PIRSF005650">
    <property type="entry name" value="Uridylate_kin"/>
    <property type="match status" value="1"/>
</dbReference>
<dbReference type="SUPFAM" id="SSF53633">
    <property type="entry name" value="Carbamate kinase-like"/>
    <property type="match status" value="1"/>
</dbReference>
<name>PYRH_CAMJD</name>